<feature type="chain" id="PRO_0000213392" description="GDP-fucose transporter">
    <location>
        <begin position="1"/>
        <end position="363"/>
    </location>
</feature>
<feature type="transmembrane region" description="Helical" evidence="1">
    <location>
        <begin position="30"/>
        <end position="47"/>
    </location>
</feature>
<feature type="transmembrane region" description="Helical" evidence="1">
    <location>
        <begin position="62"/>
        <end position="79"/>
    </location>
</feature>
<feature type="transmembrane region" description="Helical" evidence="1">
    <location>
        <begin position="126"/>
        <end position="148"/>
    </location>
</feature>
<feature type="transmembrane region" description="Helical" evidence="1">
    <location>
        <begin position="152"/>
        <end position="171"/>
    </location>
</feature>
<feature type="transmembrane region" description="Helical" evidence="1">
    <location>
        <begin position="180"/>
        <end position="202"/>
    </location>
</feature>
<feature type="transmembrane region" description="Helical" evidence="1">
    <location>
        <begin position="222"/>
        <end position="244"/>
    </location>
</feature>
<feature type="transmembrane region" description="Helical" evidence="1">
    <location>
        <begin position="251"/>
        <end position="273"/>
    </location>
</feature>
<feature type="transmembrane region" description="Helical" evidence="1">
    <location>
        <begin position="307"/>
        <end position="326"/>
    </location>
</feature>
<feature type="region of interest" description="Disordered" evidence="2">
    <location>
        <begin position="334"/>
        <end position="363"/>
    </location>
</feature>
<feature type="compositionally biased region" description="Basic and acidic residues" evidence="2">
    <location>
        <begin position="344"/>
        <end position="353"/>
    </location>
</feature>
<evidence type="ECO:0000255" key="1"/>
<evidence type="ECO:0000256" key="2">
    <source>
        <dbReference type="SAM" id="MobiDB-lite"/>
    </source>
</evidence>
<evidence type="ECO:0000269" key="3">
    <source>
    </source>
</evidence>
<evidence type="ECO:0000269" key="4">
    <source>
    </source>
</evidence>
<evidence type="ECO:0000305" key="5"/>
<evidence type="ECO:0000312" key="6">
    <source>
        <dbReference type="WormBase" id="C50F4.14a"/>
    </source>
</evidence>
<sequence length="363" mass="40401">MKLHEENNKALFEAMRNRENPTKWESYKQVITAVSAYWVFSIGLVFLNKYLLSSVQLDAPLFITWYQCLVTVFLCLFLSKTSKAYGLFKFPSMPIDAKISREVLPLSVVFVAMISFNNLCLKYVGVSFYYVGRSLTTVFNVVCTYLILGQKTSGQAIGCCALIIFGFLLGVDQEGVTGTLSYTGVIFGVLASLSVALNAIYTRKVLSSVGDCLWRLTMYNNLNALVLFLPLMLFNGEFGAVFYFDKLFDTTFWILMTLGGVFGFMMGYVTGWQIQATSPLTHNISGTAKAAAQTVMAVVWYSELKTLLWWTSNFVVLFGSGMYTYVQKRVMDKKNSGASPASEAKSDKVKLLGRDGNAAEESV</sequence>
<proteinExistence type="evidence at transcript level"/>
<protein>
    <recommendedName>
        <fullName>GDP-fucose transporter</fullName>
    </recommendedName>
    <alternativeName>
        <fullName evidence="6">Nucleotide sugar transporter protein 10</fullName>
    </alternativeName>
</protein>
<dbReference type="EMBL" id="AF323969">
    <property type="protein sequence ID" value="AAK50396.1"/>
    <property type="molecule type" value="mRNA"/>
</dbReference>
<dbReference type="EMBL" id="Z70750">
    <property type="protein sequence ID" value="CAA94748.2"/>
    <property type="molecule type" value="Genomic_DNA"/>
</dbReference>
<dbReference type="PIR" id="T20120">
    <property type="entry name" value="T20120"/>
</dbReference>
<dbReference type="RefSeq" id="NP_001263841.1">
    <property type="nucleotide sequence ID" value="NM_001276912.2"/>
</dbReference>
<dbReference type="SMR" id="Q968A5"/>
<dbReference type="FunCoup" id="Q968A5">
    <property type="interactions" value="1998"/>
</dbReference>
<dbReference type="STRING" id="6239.C50F4.14a.1"/>
<dbReference type="PaxDb" id="6239-C50F4.14a"/>
<dbReference type="EnsemblMetazoa" id="C50F4.14a.1">
    <property type="protein sequence ID" value="C50F4.14a.1"/>
    <property type="gene ID" value="WBGene00008237"/>
</dbReference>
<dbReference type="GeneID" id="179342"/>
<dbReference type="KEGG" id="cel:CELE_C50F4.14"/>
<dbReference type="UCSC" id="C50F4.14">
    <property type="organism name" value="c. elegans"/>
</dbReference>
<dbReference type="AGR" id="WB:WBGene00008237"/>
<dbReference type="CTD" id="179342"/>
<dbReference type="WormBase" id="C50F4.14a">
    <property type="protein sequence ID" value="CE30910"/>
    <property type="gene ID" value="WBGene00008237"/>
    <property type="gene designation" value="nstp-10"/>
</dbReference>
<dbReference type="eggNOG" id="KOG1442">
    <property type="taxonomic scope" value="Eukaryota"/>
</dbReference>
<dbReference type="GeneTree" id="ENSGT00390000013315"/>
<dbReference type="InParanoid" id="Q968A5"/>
<dbReference type="OMA" id="WWTSNIV"/>
<dbReference type="OrthoDB" id="5547497at2759"/>
<dbReference type="PhylomeDB" id="Q968A5"/>
<dbReference type="Reactome" id="R-CEL-6787639">
    <property type="pathway name" value="GDP-fucose biosynthesis"/>
</dbReference>
<dbReference type="Reactome" id="R-CEL-727802">
    <property type="pathway name" value="Transport of nucleotide sugars"/>
</dbReference>
<dbReference type="PRO" id="PR:Q968A5"/>
<dbReference type="Proteomes" id="UP000001940">
    <property type="component" value="Chromosome V"/>
</dbReference>
<dbReference type="Bgee" id="WBGene00008237">
    <property type="expression patterns" value="Expressed in adult organism and 4 other cell types or tissues"/>
</dbReference>
<dbReference type="ExpressionAtlas" id="Q968A5">
    <property type="expression patterns" value="baseline and differential"/>
</dbReference>
<dbReference type="GO" id="GO:0005794">
    <property type="term" value="C:Golgi apparatus"/>
    <property type="evidence" value="ECO:0000318"/>
    <property type="project" value="GO_Central"/>
</dbReference>
<dbReference type="GO" id="GO:0000139">
    <property type="term" value="C:Golgi membrane"/>
    <property type="evidence" value="ECO:0007669"/>
    <property type="project" value="UniProtKB-SubCell"/>
</dbReference>
<dbReference type="GO" id="GO:0015297">
    <property type="term" value="F:antiporter activity"/>
    <property type="evidence" value="ECO:0000318"/>
    <property type="project" value="GO_Central"/>
</dbReference>
<dbReference type="GO" id="GO:0005457">
    <property type="term" value="F:GDP-fucose transmembrane transporter activity"/>
    <property type="evidence" value="ECO:0000318"/>
    <property type="project" value="GO_Central"/>
</dbReference>
<dbReference type="GO" id="GO:0036085">
    <property type="term" value="P:GDP-fucose import into Golgi lumen"/>
    <property type="evidence" value="ECO:0000318"/>
    <property type="project" value="GO_Central"/>
</dbReference>
<dbReference type="InterPro" id="IPR004853">
    <property type="entry name" value="Sugar_P_trans_dom"/>
</dbReference>
<dbReference type="InterPro" id="IPR050186">
    <property type="entry name" value="TPT_transporter"/>
</dbReference>
<dbReference type="PANTHER" id="PTHR11132">
    <property type="entry name" value="SOLUTE CARRIER FAMILY 35"/>
    <property type="match status" value="1"/>
</dbReference>
<dbReference type="Pfam" id="PF03151">
    <property type="entry name" value="TPT"/>
    <property type="match status" value="1"/>
</dbReference>
<reference key="1">
    <citation type="journal article" date="2001" name="Nat. Genet.">
        <title>The gene defective in leukocyte adhesion deficiency II encodes a putative GDP-fucose transporter.</title>
        <authorList>
            <person name="Luehn K."/>
            <person name="Wild M.K."/>
            <person name="Eckhardt M."/>
            <person name="Gerardy-Schahn R."/>
            <person name="Vestweber D."/>
        </authorList>
    </citation>
    <scope>NUCLEOTIDE SEQUENCE [MRNA]</scope>
    <scope>FUNCTION</scope>
    <scope>SUBCELLULAR LOCATION</scope>
    <source>
        <strain>Bristol N2</strain>
    </source>
</reference>
<reference key="2">
    <citation type="journal article" date="1998" name="Science">
        <title>Genome sequence of the nematode C. elegans: a platform for investigating biology.</title>
        <authorList>
            <consortium name="The C. elegans sequencing consortium"/>
        </authorList>
    </citation>
    <scope>NUCLEOTIDE SEQUENCE [LARGE SCALE GENOMIC DNA]</scope>
    <source>
        <strain>Bristol N2</strain>
    </source>
</reference>
<keyword id="KW-0333">Golgi apparatus</keyword>
<keyword id="KW-0472">Membrane</keyword>
<keyword id="KW-1185">Reference proteome</keyword>
<keyword id="KW-0762">Sugar transport</keyword>
<keyword id="KW-0812">Transmembrane</keyword>
<keyword id="KW-1133">Transmembrane helix</keyword>
<keyword id="KW-0813">Transport</keyword>
<name>FUC10_CAEEL</name>
<comment type="function">
    <text evidence="3">Involved in GDP-fucose import from the cytoplasm into the Golgi lumen.</text>
</comment>
<comment type="subcellular location">
    <subcellularLocation>
        <location evidence="3">Golgi apparatus membrane</location>
        <topology evidence="4">Multi-pass membrane protein</topology>
    </subcellularLocation>
</comment>
<comment type="similarity">
    <text evidence="5">Belongs to the TPT transporter family. SLC35C subfamily.</text>
</comment>
<accession>Q968A5</accession>
<accession>Q18747</accession>
<gene>
    <name evidence="6" type="primary">nstp-10</name>
    <name evidence="6" type="ORF">C50F4.14</name>
</gene>
<organism>
    <name type="scientific">Caenorhabditis elegans</name>
    <dbReference type="NCBI Taxonomy" id="6239"/>
    <lineage>
        <taxon>Eukaryota</taxon>
        <taxon>Metazoa</taxon>
        <taxon>Ecdysozoa</taxon>
        <taxon>Nematoda</taxon>
        <taxon>Chromadorea</taxon>
        <taxon>Rhabditida</taxon>
        <taxon>Rhabditina</taxon>
        <taxon>Rhabditomorpha</taxon>
        <taxon>Rhabditoidea</taxon>
        <taxon>Rhabditidae</taxon>
        <taxon>Peloderinae</taxon>
        <taxon>Caenorhabditis</taxon>
    </lineage>
</organism>